<name>RL3_SYNJA</name>
<keyword id="KW-0687">Ribonucleoprotein</keyword>
<keyword id="KW-0689">Ribosomal protein</keyword>
<keyword id="KW-0694">RNA-binding</keyword>
<keyword id="KW-0699">rRNA-binding</keyword>
<dbReference type="EMBL" id="CP000239">
    <property type="protein sequence ID" value="ABC99366.1"/>
    <property type="molecule type" value="Genomic_DNA"/>
</dbReference>
<dbReference type="RefSeq" id="WP_011430047.1">
    <property type="nucleotide sequence ID" value="NC_007775.1"/>
</dbReference>
<dbReference type="SMR" id="Q2JV81"/>
<dbReference type="STRING" id="321327.CYA_1178"/>
<dbReference type="KEGG" id="cya:CYA_1178"/>
<dbReference type="eggNOG" id="COG0087">
    <property type="taxonomic scope" value="Bacteria"/>
</dbReference>
<dbReference type="HOGENOM" id="CLU_044142_4_1_3"/>
<dbReference type="OrthoDB" id="9806135at2"/>
<dbReference type="Proteomes" id="UP000008818">
    <property type="component" value="Chromosome"/>
</dbReference>
<dbReference type="GO" id="GO:0022625">
    <property type="term" value="C:cytosolic large ribosomal subunit"/>
    <property type="evidence" value="ECO:0007669"/>
    <property type="project" value="TreeGrafter"/>
</dbReference>
<dbReference type="GO" id="GO:0019843">
    <property type="term" value="F:rRNA binding"/>
    <property type="evidence" value="ECO:0007669"/>
    <property type="project" value="UniProtKB-UniRule"/>
</dbReference>
<dbReference type="GO" id="GO:0003735">
    <property type="term" value="F:structural constituent of ribosome"/>
    <property type="evidence" value="ECO:0007669"/>
    <property type="project" value="InterPro"/>
</dbReference>
<dbReference type="GO" id="GO:0006412">
    <property type="term" value="P:translation"/>
    <property type="evidence" value="ECO:0007669"/>
    <property type="project" value="UniProtKB-UniRule"/>
</dbReference>
<dbReference type="FunFam" id="3.30.160.810:FF:000001">
    <property type="entry name" value="50S ribosomal protein L3"/>
    <property type="match status" value="1"/>
</dbReference>
<dbReference type="FunFam" id="2.40.30.10:FF:000065">
    <property type="entry name" value="50S ribosomal protein L3, chloroplastic"/>
    <property type="match status" value="1"/>
</dbReference>
<dbReference type="Gene3D" id="3.30.160.810">
    <property type="match status" value="1"/>
</dbReference>
<dbReference type="Gene3D" id="2.40.30.10">
    <property type="entry name" value="Translation factors"/>
    <property type="match status" value="1"/>
</dbReference>
<dbReference type="HAMAP" id="MF_01325_B">
    <property type="entry name" value="Ribosomal_uL3_B"/>
    <property type="match status" value="1"/>
</dbReference>
<dbReference type="InterPro" id="IPR000597">
    <property type="entry name" value="Ribosomal_uL3"/>
</dbReference>
<dbReference type="InterPro" id="IPR019927">
    <property type="entry name" value="Ribosomal_uL3_bac/org-type"/>
</dbReference>
<dbReference type="InterPro" id="IPR019926">
    <property type="entry name" value="Ribosomal_uL3_CS"/>
</dbReference>
<dbReference type="InterPro" id="IPR009000">
    <property type="entry name" value="Transl_B-barrel_sf"/>
</dbReference>
<dbReference type="NCBIfam" id="TIGR03625">
    <property type="entry name" value="L3_bact"/>
    <property type="match status" value="1"/>
</dbReference>
<dbReference type="PANTHER" id="PTHR11229">
    <property type="entry name" value="50S RIBOSOMAL PROTEIN L3"/>
    <property type="match status" value="1"/>
</dbReference>
<dbReference type="PANTHER" id="PTHR11229:SF16">
    <property type="entry name" value="LARGE RIBOSOMAL SUBUNIT PROTEIN UL3C"/>
    <property type="match status" value="1"/>
</dbReference>
<dbReference type="Pfam" id="PF00297">
    <property type="entry name" value="Ribosomal_L3"/>
    <property type="match status" value="1"/>
</dbReference>
<dbReference type="SUPFAM" id="SSF50447">
    <property type="entry name" value="Translation proteins"/>
    <property type="match status" value="1"/>
</dbReference>
<dbReference type="PROSITE" id="PS00474">
    <property type="entry name" value="RIBOSOMAL_L3"/>
    <property type="match status" value="1"/>
</dbReference>
<organism>
    <name type="scientific">Synechococcus sp. (strain JA-3-3Ab)</name>
    <name type="common">Cyanobacteria bacterium Yellowstone A-Prime</name>
    <dbReference type="NCBI Taxonomy" id="321327"/>
    <lineage>
        <taxon>Bacteria</taxon>
        <taxon>Bacillati</taxon>
        <taxon>Cyanobacteriota</taxon>
        <taxon>Cyanophyceae</taxon>
        <taxon>Synechococcales</taxon>
        <taxon>Synechococcaceae</taxon>
        <taxon>Synechococcus</taxon>
    </lineage>
</organism>
<gene>
    <name evidence="1" type="primary">rplC</name>
    <name evidence="1" type="synonym">rpl3</name>
    <name type="ordered locus">CYA_1178</name>
</gene>
<reference key="1">
    <citation type="journal article" date="2007" name="ISME J.">
        <title>Population level functional diversity in a microbial community revealed by comparative genomic and metagenomic analyses.</title>
        <authorList>
            <person name="Bhaya D."/>
            <person name="Grossman A.R."/>
            <person name="Steunou A.-S."/>
            <person name="Khuri N."/>
            <person name="Cohan F.M."/>
            <person name="Hamamura N."/>
            <person name="Melendrez M.C."/>
            <person name="Bateson M.M."/>
            <person name="Ward D.M."/>
            <person name="Heidelberg J.F."/>
        </authorList>
    </citation>
    <scope>NUCLEOTIDE SEQUENCE [LARGE SCALE GENOMIC DNA]</scope>
    <source>
        <strain>JA-3-3Ab</strain>
    </source>
</reference>
<evidence type="ECO:0000255" key="1">
    <source>
        <dbReference type="HAMAP-Rule" id="MF_01325"/>
    </source>
</evidence>
<evidence type="ECO:0000256" key="2">
    <source>
        <dbReference type="SAM" id="MobiDB-lite"/>
    </source>
</evidence>
<evidence type="ECO:0000305" key="3"/>
<sequence length="214" mass="23075">MALGILGRKVGMTQIFSPEGLAIPVTVVQAGPCTVTQIKTQATDGYNAVQLGYWPTAEKHLTRAQRGHLSKAGVTELLRHLREFRVDQPEAYQLGQKITVEIFSPGQLLDVAGTSIGRGFAGYQKRHHFGRGPMSHGSKNHRRPGSVGAGTTPGRVFPGLRMAGRMGGCRVTIRKLQLVQVDPERNLLIIKGSVPGVEGGLLEITPAKQVGNKR</sequence>
<proteinExistence type="inferred from homology"/>
<feature type="chain" id="PRO_0000241424" description="Large ribosomal subunit protein uL3">
    <location>
        <begin position="1"/>
        <end position="214"/>
    </location>
</feature>
<feature type="region of interest" description="Disordered" evidence="2">
    <location>
        <begin position="129"/>
        <end position="155"/>
    </location>
</feature>
<accession>Q2JV81</accession>
<comment type="function">
    <text evidence="1">One of the primary rRNA binding proteins, it binds directly near the 3'-end of the 23S rRNA, where it nucleates assembly of the 50S subunit.</text>
</comment>
<comment type="subunit">
    <text evidence="1">Part of the 50S ribosomal subunit. Forms a cluster with proteins L14 and L19.</text>
</comment>
<comment type="similarity">
    <text evidence="1">Belongs to the universal ribosomal protein uL3 family.</text>
</comment>
<protein>
    <recommendedName>
        <fullName evidence="1">Large ribosomal subunit protein uL3</fullName>
    </recommendedName>
    <alternativeName>
        <fullName evidence="3">50S ribosomal protein L3</fullName>
    </alternativeName>
</protein>